<feature type="chain" id="PRO_1000131799" description="N(4)-acetylcytidine amidohydrolase">
    <location>
        <begin position="1"/>
        <end position="103"/>
    </location>
</feature>
<feature type="domain" description="ASCH" evidence="1">
    <location>
        <begin position="6"/>
        <end position="94"/>
    </location>
</feature>
<feature type="active site" description="Proton acceptor" evidence="2">
    <location>
        <position position="21"/>
    </location>
</feature>
<feature type="active site" description="Nucleophile" evidence="2">
    <location>
        <position position="24"/>
    </location>
</feature>
<feature type="active site" description="Proton donor" evidence="2">
    <location>
        <position position="74"/>
    </location>
</feature>
<protein>
    <recommendedName>
        <fullName evidence="2">N(4)-acetylcytidine amidohydrolase</fullName>
        <shortName evidence="2">ac4C amidohydrolase</shortName>
        <ecNumber evidence="2">3.5.1.135</ecNumber>
    </recommendedName>
</protein>
<sequence>MQPNDITFFQRFQNDILAGRKTITIRDASESHFKAGDMLRVGRFEDDGYFCTIEVTGTSTVTLDTLNEKHAQQENMSLDELKRVIAEIYPNQTQFYVIDFKCL</sequence>
<name>AC4CH_SALSV</name>
<reference key="1">
    <citation type="journal article" date="2011" name="J. Bacteriol.">
        <title>Comparative genomics of 28 Salmonella enterica isolates: evidence for CRISPR-mediated adaptive sublineage evolution.</title>
        <authorList>
            <person name="Fricke W.F."/>
            <person name="Mammel M.K."/>
            <person name="McDermott P.F."/>
            <person name="Tartera C."/>
            <person name="White D.G."/>
            <person name="Leclerc J.E."/>
            <person name="Ravel J."/>
            <person name="Cebula T.A."/>
        </authorList>
    </citation>
    <scope>NUCLEOTIDE SEQUENCE [LARGE SCALE GENOMIC DNA]</scope>
    <source>
        <strain>CVM19633</strain>
    </source>
</reference>
<keyword id="KW-0378">Hydrolase</keyword>
<proteinExistence type="inferred from homology"/>
<evidence type="ECO:0000255" key="1"/>
<evidence type="ECO:0000255" key="2">
    <source>
        <dbReference type="HAMAP-Rule" id="MF_00684"/>
    </source>
</evidence>
<gene>
    <name type="primary">yqfB</name>
    <name type="ordered locus">SeSA_A3219</name>
</gene>
<comment type="function">
    <text evidence="2">Catalyzes the hydrolysis of N(4)-acetylcytidine (ac4C).</text>
</comment>
<comment type="catalytic activity">
    <reaction evidence="2">
        <text>N(4)-acetylcytidine + H2O = cytidine + acetate + H(+)</text>
        <dbReference type="Rhea" id="RHEA:62932"/>
        <dbReference type="ChEBI" id="CHEBI:15377"/>
        <dbReference type="ChEBI" id="CHEBI:15378"/>
        <dbReference type="ChEBI" id="CHEBI:17562"/>
        <dbReference type="ChEBI" id="CHEBI:30089"/>
        <dbReference type="ChEBI" id="CHEBI:70989"/>
        <dbReference type="EC" id="3.5.1.135"/>
    </reaction>
</comment>
<comment type="catalytic activity">
    <reaction evidence="2">
        <text>N(4)-acetyl-2'-deoxycytidine + H2O = 2'-deoxycytidine + acetate + H(+)</text>
        <dbReference type="Rhea" id="RHEA:62936"/>
        <dbReference type="ChEBI" id="CHEBI:15377"/>
        <dbReference type="ChEBI" id="CHEBI:15378"/>
        <dbReference type="ChEBI" id="CHEBI:15698"/>
        <dbReference type="ChEBI" id="CHEBI:30089"/>
        <dbReference type="ChEBI" id="CHEBI:146133"/>
        <dbReference type="EC" id="3.5.1.135"/>
    </reaction>
</comment>
<comment type="catalytic activity">
    <reaction evidence="2">
        <text>N(4)-acetylcytosine + H2O = cytosine + acetate + H(+)</text>
        <dbReference type="Rhea" id="RHEA:62940"/>
        <dbReference type="ChEBI" id="CHEBI:15377"/>
        <dbReference type="ChEBI" id="CHEBI:15378"/>
        <dbReference type="ChEBI" id="CHEBI:16040"/>
        <dbReference type="ChEBI" id="CHEBI:30089"/>
        <dbReference type="ChEBI" id="CHEBI:146134"/>
        <dbReference type="EC" id="3.5.1.135"/>
    </reaction>
</comment>
<comment type="similarity">
    <text evidence="2">Belongs to the N(4)-acetylcytidine amidohydrolase family.</text>
</comment>
<accession>B4TUR7</accession>
<dbReference type="EC" id="3.5.1.135" evidence="2"/>
<dbReference type="EMBL" id="CP001127">
    <property type="protein sequence ID" value="ACF89221.1"/>
    <property type="molecule type" value="Genomic_DNA"/>
</dbReference>
<dbReference type="RefSeq" id="WP_001182972.1">
    <property type="nucleotide sequence ID" value="NC_011094.1"/>
</dbReference>
<dbReference type="SMR" id="B4TUR7"/>
<dbReference type="KEGG" id="sew:SeSA_A3219"/>
<dbReference type="HOGENOM" id="CLU_152586_0_0_6"/>
<dbReference type="Proteomes" id="UP000001865">
    <property type="component" value="Chromosome"/>
</dbReference>
<dbReference type="GO" id="GO:0005829">
    <property type="term" value="C:cytosol"/>
    <property type="evidence" value="ECO:0007669"/>
    <property type="project" value="TreeGrafter"/>
</dbReference>
<dbReference type="GO" id="GO:0016813">
    <property type="term" value="F:hydrolase activity, acting on carbon-nitrogen (but not peptide) bonds, in linear amidines"/>
    <property type="evidence" value="ECO:0007669"/>
    <property type="project" value="UniProtKB-UniRule"/>
</dbReference>
<dbReference type="GO" id="GO:0106251">
    <property type="term" value="F:N4-acetylcytidine amidohydrolase activity"/>
    <property type="evidence" value="ECO:0007669"/>
    <property type="project" value="RHEA"/>
</dbReference>
<dbReference type="CDD" id="cd06552">
    <property type="entry name" value="ASCH_yqfb_like"/>
    <property type="match status" value="1"/>
</dbReference>
<dbReference type="FunFam" id="2.30.130.30:FF:000001">
    <property type="entry name" value="UPF0267 protein YqfB"/>
    <property type="match status" value="1"/>
</dbReference>
<dbReference type="Gene3D" id="2.30.130.30">
    <property type="entry name" value="Hypothetical protein"/>
    <property type="match status" value="1"/>
</dbReference>
<dbReference type="HAMAP" id="MF_00684">
    <property type="entry name" value="ac4C_amidohydr"/>
    <property type="match status" value="1"/>
</dbReference>
<dbReference type="InterPro" id="IPR008314">
    <property type="entry name" value="AC4CH"/>
</dbReference>
<dbReference type="InterPro" id="IPR007374">
    <property type="entry name" value="ASCH_domain"/>
</dbReference>
<dbReference type="InterPro" id="IPR015947">
    <property type="entry name" value="PUA-like_sf"/>
</dbReference>
<dbReference type="NCBIfam" id="NF003443">
    <property type="entry name" value="PRK04980.1"/>
    <property type="match status" value="1"/>
</dbReference>
<dbReference type="PANTHER" id="PTHR38088">
    <property type="entry name" value="UCP029143 FAMILY PROTEIN"/>
    <property type="match status" value="1"/>
</dbReference>
<dbReference type="PANTHER" id="PTHR38088:SF2">
    <property type="entry name" value="UCP029143 FAMILY PROTEIN"/>
    <property type="match status" value="1"/>
</dbReference>
<dbReference type="Pfam" id="PF04266">
    <property type="entry name" value="ASCH"/>
    <property type="match status" value="1"/>
</dbReference>
<dbReference type="PIRSF" id="PIRSF029143">
    <property type="entry name" value="UCP029143"/>
    <property type="match status" value="1"/>
</dbReference>
<dbReference type="SMART" id="SM01022">
    <property type="entry name" value="ASCH"/>
    <property type="match status" value="1"/>
</dbReference>
<dbReference type="SUPFAM" id="SSF88697">
    <property type="entry name" value="PUA domain-like"/>
    <property type="match status" value="1"/>
</dbReference>
<organism>
    <name type="scientific">Salmonella schwarzengrund (strain CVM19633)</name>
    <dbReference type="NCBI Taxonomy" id="439843"/>
    <lineage>
        <taxon>Bacteria</taxon>
        <taxon>Pseudomonadati</taxon>
        <taxon>Pseudomonadota</taxon>
        <taxon>Gammaproteobacteria</taxon>
        <taxon>Enterobacterales</taxon>
        <taxon>Enterobacteriaceae</taxon>
        <taxon>Salmonella</taxon>
    </lineage>
</organism>